<organism>
    <name type="scientific">Mus musculus</name>
    <name type="common">Mouse</name>
    <dbReference type="NCBI Taxonomy" id="10090"/>
    <lineage>
        <taxon>Eukaryota</taxon>
        <taxon>Metazoa</taxon>
        <taxon>Chordata</taxon>
        <taxon>Craniata</taxon>
        <taxon>Vertebrata</taxon>
        <taxon>Euteleostomi</taxon>
        <taxon>Mammalia</taxon>
        <taxon>Eutheria</taxon>
        <taxon>Euarchontoglires</taxon>
        <taxon>Glires</taxon>
        <taxon>Rodentia</taxon>
        <taxon>Myomorpha</taxon>
        <taxon>Muroidea</taxon>
        <taxon>Muridae</taxon>
        <taxon>Murinae</taxon>
        <taxon>Mus</taxon>
        <taxon>Mus</taxon>
    </lineage>
</organism>
<accession>Q9CQY8</accession>
<accession>Q9D3Q0</accession>
<accession>Q9D3R0</accession>
<sequence length="226" mass="24760">MTCCEGWTSCNGFSLLILILLGVVINCIPLGISLVEADSTSQNPISCYEWWFPGIIGAGLMAIPATTMSLAARKRACCNNKTGMFLSSLFSVITVVGAVYCMLVSLQALLEGPLICNTQANSTVTCEFSLKNLSKFDPESFNLLWFFNGTCVSPTDFKNPTINNMVSNWKIPNSNSEEDRHRIFHFSVFMSLLLVGILELLFGLSQILIGFLGCLCGVSQRRSQIV</sequence>
<comment type="function">
    <text evidence="1">Polytopic transmembrane protein. Inhibits regulated intramembrane proteolysis (RIP) of CREB3L1, inhibiting its activation and the induction of collagen synthesis. In response to ceramide, which alters TM4SF20 membrane topology, stimulates RIP activation of CREB3L1. Ceramide reverses the direction through which transmembrane helices are translocated into the endoplasmic reticulum membrane during translation of TM4SF20, this mechanism is called 'regulated alternative translocation' (RAT) and regulates the function of the transmembrane protein.</text>
</comment>
<comment type="subcellular location">
    <subcellularLocation>
        <location evidence="1">Membrane</location>
        <topology evidence="1">Multi-pass membrane protein</topology>
    </subcellularLocation>
    <subcellularLocation>
        <location evidence="1">Endoplasmic reticulum membrane</location>
        <topology evidence="1">Multi-pass membrane protein</topology>
    </subcellularLocation>
    <text evidence="1">Ceramide alters the direction through which transmembrane helices are translocated into the endoplasmic reticulum membrane during translation of TM4SF20.</text>
</comment>
<comment type="domain">
    <text evidence="1">The first transmembrane helix plays a critical role for the insertion orientation in the endoplasmic reticulum membrane.</text>
</comment>
<comment type="PTM">
    <text evidence="1">Glycosylated at Asn-132, Asn-148 and Asn-163 in presence of ceramide which inverts the orientation of TM4SF20 in membranes exposing these residues to the endoplasmic reticulum lumen.</text>
</comment>
<comment type="PTM">
    <text evidence="1">Cleaved by signal peptidase at Ser-14 but the peptide does not act as a signal peptide. Cleavage is inhibited by ceramide which inverts the orientation of TM4SF20 in membranes exposing the N-terminus to the cytosol and not to the endoplasmic reticulum lumen.</text>
</comment>
<comment type="similarity">
    <text evidence="3">Belongs to the L6 tetraspanin family.</text>
</comment>
<feature type="chain" id="PRO_0000251229" description="Transmembrane 4 L6 family member 20">
    <location>
        <begin position="1"/>
        <end position="226"/>
    </location>
</feature>
<feature type="topological domain" description="Lumenal" evidence="3">
    <location>
        <begin position="1"/>
        <end position="14"/>
    </location>
</feature>
<feature type="transmembrane region" description="Helical" evidence="2">
    <location>
        <begin position="15"/>
        <end position="35"/>
    </location>
</feature>
<feature type="topological domain" description="Cytoplasmic" evidence="3">
    <location>
        <begin position="36"/>
        <end position="49"/>
    </location>
</feature>
<feature type="transmembrane region" description="Helical" evidence="2">
    <location>
        <begin position="50"/>
        <end position="70"/>
    </location>
</feature>
<feature type="topological domain" description="Lumenal" evidence="3">
    <location>
        <begin position="71"/>
        <end position="83"/>
    </location>
</feature>
<feature type="transmembrane region" description="Helical" evidence="2">
    <location>
        <begin position="84"/>
        <end position="104"/>
    </location>
</feature>
<feature type="topological domain" description="Cytoplasmic" evidence="3">
    <location>
        <begin position="105"/>
        <end position="191"/>
    </location>
</feature>
<feature type="transmembrane region" description="Helical" evidence="2">
    <location>
        <begin position="192"/>
        <end position="212"/>
    </location>
</feature>
<feature type="topological domain" description="Lumenal" evidence="3">
    <location>
        <begin position="213"/>
        <end position="226"/>
    </location>
</feature>
<feature type="site" description="Cleavage" evidence="1">
    <location>
        <begin position="13"/>
        <end position="14"/>
    </location>
</feature>
<feature type="sequence conflict" description="In Ref. 1; BAB30618." evidence="3" ref="1">
    <original>C</original>
    <variation>G</variation>
    <location>
        <position position="78"/>
    </location>
</feature>
<feature type="sequence conflict" description="In Ref. 1; BAB30635." evidence="3" ref="1">
    <original>S</original>
    <variation>I</variation>
    <location>
        <position position="167"/>
    </location>
</feature>
<evidence type="ECO:0000250" key="1">
    <source>
        <dbReference type="UniProtKB" id="Q53R12"/>
    </source>
</evidence>
<evidence type="ECO:0000255" key="2"/>
<evidence type="ECO:0000305" key="3"/>
<reference key="1">
    <citation type="journal article" date="2005" name="Science">
        <title>The transcriptional landscape of the mammalian genome.</title>
        <authorList>
            <person name="Carninci P."/>
            <person name="Kasukawa T."/>
            <person name="Katayama S."/>
            <person name="Gough J."/>
            <person name="Frith M.C."/>
            <person name="Maeda N."/>
            <person name="Oyama R."/>
            <person name="Ravasi T."/>
            <person name="Lenhard B."/>
            <person name="Wells C."/>
            <person name="Kodzius R."/>
            <person name="Shimokawa K."/>
            <person name="Bajic V.B."/>
            <person name="Brenner S.E."/>
            <person name="Batalov S."/>
            <person name="Forrest A.R."/>
            <person name="Zavolan M."/>
            <person name="Davis M.J."/>
            <person name="Wilming L.G."/>
            <person name="Aidinis V."/>
            <person name="Allen J.E."/>
            <person name="Ambesi-Impiombato A."/>
            <person name="Apweiler R."/>
            <person name="Aturaliya R.N."/>
            <person name="Bailey T.L."/>
            <person name="Bansal M."/>
            <person name="Baxter L."/>
            <person name="Beisel K.W."/>
            <person name="Bersano T."/>
            <person name="Bono H."/>
            <person name="Chalk A.M."/>
            <person name="Chiu K.P."/>
            <person name="Choudhary V."/>
            <person name="Christoffels A."/>
            <person name="Clutterbuck D.R."/>
            <person name="Crowe M.L."/>
            <person name="Dalla E."/>
            <person name="Dalrymple B.P."/>
            <person name="de Bono B."/>
            <person name="Della Gatta G."/>
            <person name="di Bernardo D."/>
            <person name="Down T."/>
            <person name="Engstrom P."/>
            <person name="Fagiolini M."/>
            <person name="Faulkner G."/>
            <person name="Fletcher C.F."/>
            <person name="Fukushima T."/>
            <person name="Furuno M."/>
            <person name="Futaki S."/>
            <person name="Gariboldi M."/>
            <person name="Georgii-Hemming P."/>
            <person name="Gingeras T.R."/>
            <person name="Gojobori T."/>
            <person name="Green R.E."/>
            <person name="Gustincich S."/>
            <person name="Harbers M."/>
            <person name="Hayashi Y."/>
            <person name="Hensch T.K."/>
            <person name="Hirokawa N."/>
            <person name="Hill D."/>
            <person name="Huminiecki L."/>
            <person name="Iacono M."/>
            <person name="Ikeo K."/>
            <person name="Iwama A."/>
            <person name="Ishikawa T."/>
            <person name="Jakt M."/>
            <person name="Kanapin A."/>
            <person name="Katoh M."/>
            <person name="Kawasawa Y."/>
            <person name="Kelso J."/>
            <person name="Kitamura H."/>
            <person name="Kitano H."/>
            <person name="Kollias G."/>
            <person name="Krishnan S.P."/>
            <person name="Kruger A."/>
            <person name="Kummerfeld S.K."/>
            <person name="Kurochkin I.V."/>
            <person name="Lareau L.F."/>
            <person name="Lazarevic D."/>
            <person name="Lipovich L."/>
            <person name="Liu J."/>
            <person name="Liuni S."/>
            <person name="McWilliam S."/>
            <person name="Madan Babu M."/>
            <person name="Madera M."/>
            <person name="Marchionni L."/>
            <person name="Matsuda H."/>
            <person name="Matsuzawa S."/>
            <person name="Miki H."/>
            <person name="Mignone F."/>
            <person name="Miyake S."/>
            <person name="Morris K."/>
            <person name="Mottagui-Tabar S."/>
            <person name="Mulder N."/>
            <person name="Nakano N."/>
            <person name="Nakauchi H."/>
            <person name="Ng P."/>
            <person name="Nilsson R."/>
            <person name="Nishiguchi S."/>
            <person name="Nishikawa S."/>
            <person name="Nori F."/>
            <person name="Ohara O."/>
            <person name="Okazaki Y."/>
            <person name="Orlando V."/>
            <person name="Pang K.C."/>
            <person name="Pavan W.J."/>
            <person name="Pavesi G."/>
            <person name="Pesole G."/>
            <person name="Petrovsky N."/>
            <person name="Piazza S."/>
            <person name="Reed J."/>
            <person name="Reid J.F."/>
            <person name="Ring B.Z."/>
            <person name="Ringwald M."/>
            <person name="Rost B."/>
            <person name="Ruan Y."/>
            <person name="Salzberg S.L."/>
            <person name="Sandelin A."/>
            <person name="Schneider C."/>
            <person name="Schoenbach C."/>
            <person name="Sekiguchi K."/>
            <person name="Semple C.A."/>
            <person name="Seno S."/>
            <person name="Sessa L."/>
            <person name="Sheng Y."/>
            <person name="Shibata Y."/>
            <person name="Shimada H."/>
            <person name="Shimada K."/>
            <person name="Silva D."/>
            <person name="Sinclair B."/>
            <person name="Sperling S."/>
            <person name="Stupka E."/>
            <person name="Sugiura K."/>
            <person name="Sultana R."/>
            <person name="Takenaka Y."/>
            <person name="Taki K."/>
            <person name="Tammoja K."/>
            <person name="Tan S.L."/>
            <person name="Tang S."/>
            <person name="Taylor M.S."/>
            <person name="Tegner J."/>
            <person name="Teichmann S.A."/>
            <person name="Ueda H.R."/>
            <person name="van Nimwegen E."/>
            <person name="Verardo R."/>
            <person name="Wei C.L."/>
            <person name="Yagi K."/>
            <person name="Yamanishi H."/>
            <person name="Zabarovsky E."/>
            <person name="Zhu S."/>
            <person name="Zimmer A."/>
            <person name="Hide W."/>
            <person name="Bult C."/>
            <person name="Grimmond S.M."/>
            <person name="Teasdale R.D."/>
            <person name="Liu E.T."/>
            <person name="Brusic V."/>
            <person name="Quackenbush J."/>
            <person name="Wahlestedt C."/>
            <person name="Mattick J.S."/>
            <person name="Hume D.A."/>
            <person name="Kai C."/>
            <person name="Sasaki D."/>
            <person name="Tomaru Y."/>
            <person name="Fukuda S."/>
            <person name="Kanamori-Katayama M."/>
            <person name="Suzuki M."/>
            <person name="Aoki J."/>
            <person name="Arakawa T."/>
            <person name="Iida J."/>
            <person name="Imamura K."/>
            <person name="Itoh M."/>
            <person name="Kato T."/>
            <person name="Kawaji H."/>
            <person name="Kawagashira N."/>
            <person name="Kawashima T."/>
            <person name="Kojima M."/>
            <person name="Kondo S."/>
            <person name="Konno H."/>
            <person name="Nakano K."/>
            <person name="Ninomiya N."/>
            <person name="Nishio T."/>
            <person name="Okada M."/>
            <person name="Plessy C."/>
            <person name="Shibata K."/>
            <person name="Shiraki T."/>
            <person name="Suzuki S."/>
            <person name="Tagami M."/>
            <person name="Waki K."/>
            <person name="Watahiki A."/>
            <person name="Okamura-Oho Y."/>
            <person name="Suzuki H."/>
            <person name="Kawai J."/>
            <person name="Hayashizaki Y."/>
        </authorList>
    </citation>
    <scope>NUCLEOTIDE SEQUENCE [LARGE SCALE MRNA]</scope>
    <source>
        <strain>C57BL/6J</strain>
        <tissue>Ovary</tissue>
        <tissue>Pancreas</tissue>
        <tissue>Uterus</tissue>
    </source>
</reference>
<reference key="2">
    <citation type="journal article" date="2004" name="Genome Res.">
        <title>The status, quality, and expansion of the NIH full-length cDNA project: the Mammalian Gene Collection (MGC).</title>
        <authorList>
            <consortium name="The MGC Project Team"/>
        </authorList>
    </citation>
    <scope>NUCLEOTIDE SEQUENCE [LARGE SCALE MRNA]</scope>
</reference>
<gene>
    <name type="primary">Tm4sf20</name>
</gene>
<proteinExistence type="evidence at transcript level"/>
<protein>
    <recommendedName>
        <fullName>Transmembrane 4 L6 family member 20</fullName>
    </recommendedName>
</protein>
<keyword id="KW-0256">Endoplasmic reticulum</keyword>
<keyword id="KW-0472">Membrane</keyword>
<keyword id="KW-1185">Reference proteome</keyword>
<keyword id="KW-0812">Transmembrane</keyword>
<keyword id="KW-1133">Transmembrane helix</keyword>
<name>T4S20_MOUSE</name>
<dbReference type="EMBL" id="AK007532">
    <property type="protein sequence ID" value="BAB25093.1"/>
    <property type="molecule type" value="mRNA"/>
</dbReference>
<dbReference type="EMBL" id="AK017154">
    <property type="protein sequence ID" value="BAB30618.1"/>
    <property type="molecule type" value="mRNA"/>
</dbReference>
<dbReference type="EMBL" id="AK017195">
    <property type="protein sequence ID" value="BAB30629.1"/>
    <property type="molecule type" value="mRNA"/>
</dbReference>
<dbReference type="EMBL" id="AK017209">
    <property type="protein sequence ID" value="BAB30635.1"/>
    <property type="molecule type" value="mRNA"/>
</dbReference>
<dbReference type="EMBL" id="BC117736">
    <property type="protein sequence ID" value="AAI17737.1"/>
    <property type="molecule type" value="mRNA"/>
</dbReference>
<dbReference type="CCDS" id="CCDS15099.1"/>
<dbReference type="RefSeq" id="NP_079729.1">
    <property type="nucleotide sequence ID" value="NM_025453.4"/>
</dbReference>
<dbReference type="FunCoup" id="Q9CQY8">
    <property type="interactions" value="25"/>
</dbReference>
<dbReference type="STRING" id="10090.ENSMUSP00000027331"/>
<dbReference type="PhosphoSitePlus" id="Q9CQY8"/>
<dbReference type="PaxDb" id="10090-ENSMUSP00000027331"/>
<dbReference type="ProteomicsDB" id="263238"/>
<dbReference type="ABCD" id="Q9CQY8">
    <property type="antibodies" value="4 sequenced antibodies"/>
</dbReference>
<dbReference type="Antibodypedia" id="47680">
    <property type="antibodies" value="81 antibodies from 14 providers"/>
</dbReference>
<dbReference type="DNASU" id="66261"/>
<dbReference type="Ensembl" id="ENSMUST00000027331.3">
    <property type="protein sequence ID" value="ENSMUSP00000027331.3"/>
    <property type="gene ID" value="ENSMUSG00000026149.3"/>
</dbReference>
<dbReference type="GeneID" id="66261"/>
<dbReference type="KEGG" id="mmu:66261"/>
<dbReference type="UCSC" id="uc007bsd.1">
    <property type="organism name" value="mouse"/>
</dbReference>
<dbReference type="AGR" id="MGI:1913511"/>
<dbReference type="CTD" id="79853"/>
<dbReference type="MGI" id="MGI:1913511">
    <property type="gene designation" value="Tm4sf20"/>
</dbReference>
<dbReference type="VEuPathDB" id="HostDB:ENSMUSG00000026149"/>
<dbReference type="eggNOG" id="ENOG502RZTZ">
    <property type="taxonomic scope" value="Eukaryota"/>
</dbReference>
<dbReference type="GeneTree" id="ENSGT01030000234590"/>
<dbReference type="HOGENOM" id="CLU_105103_0_0_1"/>
<dbReference type="InParanoid" id="Q9CQY8"/>
<dbReference type="OMA" id="LEGPLMC"/>
<dbReference type="OrthoDB" id="9937421at2759"/>
<dbReference type="PhylomeDB" id="Q9CQY8"/>
<dbReference type="TreeFam" id="TF331371"/>
<dbReference type="BioGRID-ORCS" id="66261">
    <property type="hits" value="0 hits in 77 CRISPR screens"/>
</dbReference>
<dbReference type="PRO" id="PR:Q9CQY8"/>
<dbReference type="Proteomes" id="UP000000589">
    <property type="component" value="Chromosome 1"/>
</dbReference>
<dbReference type="RNAct" id="Q9CQY8">
    <property type="molecule type" value="protein"/>
</dbReference>
<dbReference type="Bgee" id="ENSMUSG00000026149">
    <property type="expression patterns" value="Expressed in duodenum and 62 other cell types or tissues"/>
</dbReference>
<dbReference type="GO" id="GO:0005789">
    <property type="term" value="C:endoplasmic reticulum membrane"/>
    <property type="evidence" value="ECO:0000250"/>
    <property type="project" value="UniProtKB"/>
</dbReference>
<dbReference type="GO" id="GO:0005925">
    <property type="term" value="C:focal adhesion"/>
    <property type="evidence" value="ECO:0007669"/>
    <property type="project" value="Ensembl"/>
</dbReference>
<dbReference type="GO" id="GO:0005886">
    <property type="term" value="C:plasma membrane"/>
    <property type="evidence" value="ECO:0007669"/>
    <property type="project" value="Ensembl"/>
</dbReference>
<dbReference type="GO" id="GO:0045861">
    <property type="term" value="P:negative regulation of proteolysis"/>
    <property type="evidence" value="ECO:0000250"/>
    <property type="project" value="UniProtKB"/>
</dbReference>
<dbReference type="InterPro" id="IPR008661">
    <property type="entry name" value="L6_membrane"/>
</dbReference>
<dbReference type="PANTHER" id="PTHR14198">
    <property type="entry name" value="TRANSMEMBRANE 4 L6 FAMILY MEMBER 1-RELATED"/>
    <property type="match status" value="1"/>
</dbReference>
<dbReference type="PANTHER" id="PTHR14198:SF17">
    <property type="entry name" value="TRANSMEMBRANE 4 L6 FAMILY MEMBER 20"/>
    <property type="match status" value="1"/>
</dbReference>
<dbReference type="Pfam" id="PF05805">
    <property type="entry name" value="L6_membrane"/>
    <property type="match status" value="1"/>
</dbReference>